<evidence type="ECO:0000256" key="1">
    <source>
        <dbReference type="SAM" id="MobiDB-lite"/>
    </source>
</evidence>
<evidence type="ECO:0000305" key="2"/>
<accession>Q01348</accession>
<name>U10_HHV6U</name>
<keyword id="KW-1185">Reference proteome</keyword>
<protein>
    <recommendedName>
        <fullName>U10 protein</fullName>
    </recommendedName>
</protein>
<feature type="chain" id="PRO_0000116319" description="U10 protein">
    <location>
        <begin position="1"/>
        <end position="503"/>
    </location>
</feature>
<feature type="region of interest" description="Disordered" evidence="1">
    <location>
        <begin position="482"/>
        <end position="503"/>
    </location>
</feature>
<gene>
    <name type="primary">U10</name>
    <name type="synonym">P1RF0</name>
    <name type="synonym">SFR1</name>
</gene>
<organismHost>
    <name type="scientific">Homo sapiens</name>
    <name type="common">Human</name>
    <dbReference type="NCBI Taxonomy" id="9606"/>
</organismHost>
<dbReference type="EMBL" id="X83413">
    <property type="protein sequence ID" value="CAA58437.2"/>
    <property type="molecule type" value="Genomic_DNA"/>
</dbReference>
<dbReference type="EMBL" id="D10082">
    <property type="protein sequence ID" value="BAA20953.1"/>
    <property type="status" value="ALT_SEQ"/>
    <property type="molecule type" value="Genomic_DNA"/>
</dbReference>
<dbReference type="RefSeq" id="NP_042901.1">
    <property type="nucleotide sequence ID" value="NC_001664.2"/>
</dbReference>
<dbReference type="DNASU" id="1487889"/>
<dbReference type="GeneID" id="1487889"/>
<dbReference type="KEGG" id="vg:1487889"/>
<dbReference type="Proteomes" id="UP000009295">
    <property type="component" value="Segment"/>
</dbReference>
<dbReference type="InterPro" id="IPR007578">
    <property type="entry name" value="Herpes_U10"/>
</dbReference>
<dbReference type="Pfam" id="PF04489">
    <property type="entry name" value="DUF570"/>
    <property type="match status" value="1"/>
</dbReference>
<comment type="similarity">
    <text evidence="2">Belongs to the herpesviridae U10 family.</text>
</comment>
<comment type="sequence caution" evidence="2">
    <conflict type="erroneous gene model prediction">
        <sequence resource="EMBL-CDS" id="BAA20953"/>
    </conflict>
</comment>
<reference key="1">
    <citation type="journal article" date="1995" name="Virology">
        <title>The DNA sequence of human herpesvirus-6: structure, coding content, and genome evolution.</title>
        <authorList>
            <person name="Gompels U.A."/>
            <person name="Nicholas J."/>
            <person name="Lawrence G.L."/>
            <person name="Jones M."/>
            <person name="Thomson B.J."/>
            <person name="Martin M.E.D."/>
            <person name="Efstathiou S."/>
            <person name="Craxton M.A."/>
            <person name="Macaulay H.A."/>
        </authorList>
    </citation>
    <scope>NUCLEOTIDE SEQUENCE [LARGE SCALE GENOMIC DNA]</scope>
</reference>
<reference key="2">
    <citation type="journal article" date="1992" name="J. Gen. Virol.">
        <title>Identification of homologues to the human cytomegalovirus US22 gene family in human herpesvirus 6.</title>
        <authorList>
            <person name="Efstathiou S."/>
            <person name="Lawrence G.L."/>
            <person name="Brown C.M."/>
            <person name="Barrell B.G."/>
        </authorList>
    </citation>
    <scope>NUCLEOTIDE SEQUENCE [GENOMIC DNA] OF 1-407</scope>
</reference>
<organism>
    <name type="scientific">Human herpesvirus 6A (strain Uganda-1102)</name>
    <name type="common">HHV-6 variant A</name>
    <name type="synonym">Human B lymphotropic virus</name>
    <dbReference type="NCBI Taxonomy" id="10370"/>
    <lineage>
        <taxon>Viruses</taxon>
        <taxon>Duplodnaviria</taxon>
        <taxon>Heunggongvirae</taxon>
        <taxon>Peploviricota</taxon>
        <taxon>Herviviricetes</taxon>
        <taxon>Herpesvirales</taxon>
        <taxon>Orthoherpesviridae</taxon>
        <taxon>Betaherpesvirinae</taxon>
        <taxon>Roseolovirus</taxon>
        <taxon>Roseolovirus humanbeta6a</taxon>
        <taxon>Human betaherpesvirus 6A</taxon>
    </lineage>
</organism>
<sequence length="503" mass="57262">MEIVTYKTVSARSPTVTWSSGFGRAIASIQKRNQDNIRKPLRFYTGLLHCLIKQYEHCLVPPNKSIRFDKGKIEVAALILDLGHQVLGRQIHVRQRIYSWTSITLPKLFTPKELYFLIASPEEENIAFNPTITKGGWISGSFSYPVDYRSNFSLTGMSANILMVPFVPYKYPLNYARFISSIDLMILNEQFPEHECGDIQILKQRNYLYLGVIKNLTWKKSVTGTGQTAPHRILKASFIGSWPDTSLPDRVALRFFNNTRFTIHCHEFSINIENLGLVKNKEKVFGTLATVCCEQIPSLLTTENLPKYLIVQFEVVTQIEEPEPLLFSSNPKLYFTGDVLNATIQLQHNPNYYELLVHAPYDIHFYPSRCHIVILPIRYFTKPDKQILISGYQNEGFFETQVMLWAPGTPLHITLRSFSPNLILPQSTPIATLFYVERMTSQNNEQKDVIAKLSENGHFIGNLKLPRENFLHHDAIADSPLASISKDSATPGPETVFSSVSPS</sequence>
<proteinExistence type="inferred from homology"/>